<reference key="1">
    <citation type="journal article" date="2010" name="J. Bacteriol.">
        <title>Complete genome sequence of Enterobacter cloacae subsp. cloacae type strain ATCC 13047.</title>
        <authorList>
            <person name="Ren Y."/>
            <person name="Ren Y."/>
            <person name="Zhou Z."/>
            <person name="Guo X."/>
            <person name="Li Y."/>
            <person name="Feng L."/>
            <person name="Wang L."/>
        </authorList>
    </citation>
    <scope>NUCLEOTIDE SEQUENCE [LARGE SCALE GENOMIC DNA]</scope>
    <source>
        <strain>ATCC 13047 / DSM 30054 / NBRC 13535 / NCTC 10005 / WDCM 00083 / NCDC 279-56</strain>
    </source>
</reference>
<organism>
    <name type="scientific">Enterobacter cloacae subsp. cloacae (strain ATCC 13047 / DSM 30054 / NBRC 13535 / NCTC 10005 / WDCM 00083 / NCDC 279-56)</name>
    <dbReference type="NCBI Taxonomy" id="716541"/>
    <lineage>
        <taxon>Bacteria</taxon>
        <taxon>Pseudomonadati</taxon>
        <taxon>Pseudomonadota</taxon>
        <taxon>Gammaproteobacteria</taxon>
        <taxon>Enterobacterales</taxon>
        <taxon>Enterobacteriaceae</taxon>
        <taxon>Enterobacter</taxon>
        <taxon>Enterobacter cloacae complex</taxon>
    </lineage>
</organism>
<name>AAEB_ENTCC</name>
<accession>D5CDA0</accession>
<gene>
    <name evidence="1" type="primary">aaeB</name>
    <name type="ordered locus">ECL_04623</name>
</gene>
<feature type="chain" id="PRO_0000414002" description="p-hydroxybenzoic acid efflux pump subunit AaeB">
    <location>
        <begin position="1"/>
        <end position="655"/>
    </location>
</feature>
<feature type="transmembrane region" description="Helical" evidence="1">
    <location>
        <begin position="13"/>
        <end position="33"/>
    </location>
</feature>
<feature type="transmembrane region" description="Helical" evidence="1">
    <location>
        <begin position="38"/>
        <end position="58"/>
    </location>
</feature>
<feature type="transmembrane region" description="Helical" evidence="1">
    <location>
        <begin position="69"/>
        <end position="89"/>
    </location>
</feature>
<feature type="transmembrane region" description="Helical" evidence="1">
    <location>
        <begin position="93"/>
        <end position="113"/>
    </location>
</feature>
<feature type="transmembrane region" description="Helical" evidence="1">
    <location>
        <begin position="121"/>
        <end position="141"/>
    </location>
</feature>
<feature type="transmembrane region" description="Helical" evidence="1">
    <location>
        <begin position="152"/>
        <end position="172"/>
    </location>
</feature>
<feature type="transmembrane region" description="Helical" evidence="1">
    <location>
        <begin position="370"/>
        <end position="390"/>
    </location>
</feature>
<feature type="transmembrane region" description="Helical" evidence="1">
    <location>
        <begin position="407"/>
        <end position="427"/>
    </location>
</feature>
<feature type="transmembrane region" description="Helical" evidence="1">
    <location>
        <begin position="431"/>
        <end position="451"/>
    </location>
</feature>
<feature type="transmembrane region" description="Helical" evidence="1">
    <location>
        <begin position="459"/>
        <end position="479"/>
    </location>
</feature>
<feature type="transmembrane region" description="Helical" evidence="1">
    <location>
        <begin position="482"/>
        <end position="502"/>
    </location>
</feature>
<sequence length="655" mass="73290">MGIFTIASQHIRFAVKLASAIVLALFVGFHFQLETPRWAVLTAAIVAAGPAFAAGGEPYSGAIRYRGMLRIIGTFIGCIAALTIIILMIRTPLLMVLVCCIWAGFCTWLSSLVKVENSYAWGLAGYTALIIVITIQTEPLLAPQFAVERCSEIVIGIVCAIVADLLFSPRSIKQEVDRELDALIVSQYQLMQLCIKHGDSEEVDKAWSGLVRRTQALEGMRSNLNMESSRWARANRRLKAINTVSLTLITQACETYLIQNTRPESVTDTFRELFAEPVETVQDVHKQLKRMRRVIAWTGERDTPVTIYTWVGAATRYLLLKRGVIGNTKISAAEEEVLQGEVVIKAESAERHHAMVNFWRTTLACMLGTLFWLWTGWTSGSGAMVMIAVVTALAMRLPNPRMVAIDFLYGTIAALPLGALYFLVILPSTQQSMLLLCISLAVMAFFIGIEVQKRRLGSLGALASTINILVLDNPMTFHFSQFLDSALGQLVGCFLAMMVILLVRDNSQARTGRVLLNQFVSAAVSSMTTNTARRKENHLPALYQQLFLLLNKFPGDIARFRLALTMIIAHQRLRNAPVPINDDLSAFHRQLRRTADHVLSASSDDKRRRYFKQLLEELDVYQEKLRVWEAPPQVTEPVARLVFMLHRYQNVLTDN</sequence>
<dbReference type="EMBL" id="CP001918">
    <property type="protein sequence ID" value="ADF64151.1"/>
    <property type="molecule type" value="Genomic_DNA"/>
</dbReference>
<dbReference type="RefSeq" id="WP_013098977.1">
    <property type="nucleotide sequence ID" value="NC_014121.1"/>
</dbReference>
<dbReference type="RefSeq" id="YP_003615100.1">
    <property type="nucleotide sequence ID" value="NC_014121.1"/>
</dbReference>
<dbReference type="SMR" id="D5CDA0"/>
<dbReference type="STRING" id="716541.ECL_04623"/>
<dbReference type="EnsemblBacteria" id="ADF64151">
    <property type="protein sequence ID" value="ADF64151"/>
    <property type="gene ID" value="ECL_04623"/>
</dbReference>
<dbReference type="KEGG" id="enc:ECL_04623"/>
<dbReference type="PATRIC" id="fig|716541.4.peg.4771"/>
<dbReference type="eggNOG" id="COG1289">
    <property type="taxonomic scope" value="Bacteria"/>
</dbReference>
<dbReference type="HOGENOM" id="CLU_027647_0_0_6"/>
<dbReference type="OrthoDB" id="9807111at2"/>
<dbReference type="Proteomes" id="UP000002363">
    <property type="component" value="Chromosome"/>
</dbReference>
<dbReference type="GO" id="GO:0005886">
    <property type="term" value="C:plasma membrane"/>
    <property type="evidence" value="ECO:0007669"/>
    <property type="project" value="UniProtKB-SubCell"/>
</dbReference>
<dbReference type="GO" id="GO:0022857">
    <property type="term" value="F:transmembrane transporter activity"/>
    <property type="evidence" value="ECO:0007669"/>
    <property type="project" value="UniProtKB-UniRule"/>
</dbReference>
<dbReference type="GO" id="GO:0046942">
    <property type="term" value="P:carboxylic acid transport"/>
    <property type="evidence" value="ECO:0007669"/>
    <property type="project" value="InterPro"/>
</dbReference>
<dbReference type="HAMAP" id="MF_01545">
    <property type="entry name" value="AaeB"/>
    <property type="match status" value="1"/>
</dbReference>
<dbReference type="InterPro" id="IPR006726">
    <property type="entry name" value="PHBA_efflux_AaeB/fusaric-R"/>
</dbReference>
<dbReference type="InterPro" id="IPR023706">
    <property type="entry name" value="PHBA_efflux_pump_AaeB"/>
</dbReference>
<dbReference type="NCBIfam" id="NF007916">
    <property type="entry name" value="PRK10631.1"/>
    <property type="match status" value="1"/>
</dbReference>
<dbReference type="PANTHER" id="PTHR30509:SF9">
    <property type="entry name" value="MULTIDRUG RESISTANCE PROTEIN MDTO"/>
    <property type="match status" value="1"/>
</dbReference>
<dbReference type="PANTHER" id="PTHR30509">
    <property type="entry name" value="P-HYDROXYBENZOIC ACID EFFLUX PUMP SUBUNIT-RELATED"/>
    <property type="match status" value="1"/>
</dbReference>
<dbReference type="Pfam" id="PF04632">
    <property type="entry name" value="FUSC"/>
    <property type="match status" value="1"/>
</dbReference>
<comment type="function">
    <text evidence="1">Forms an efflux pump with AaeA. Could function as a metabolic relief valve, allowing to eliminate certain compounds when they accumulate to high levels in the cell.</text>
</comment>
<comment type="subcellular location">
    <subcellularLocation>
        <location evidence="1">Cell inner membrane</location>
        <topology evidence="1">Multi-pass membrane protein</topology>
    </subcellularLocation>
</comment>
<comment type="similarity">
    <text evidence="1">Belongs to the aromatic acid exporter ArAE (TC 2.A.85) family.</text>
</comment>
<evidence type="ECO:0000255" key="1">
    <source>
        <dbReference type="HAMAP-Rule" id="MF_01545"/>
    </source>
</evidence>
<keyword id="KW-0997">Cell inner membrane</keyword>
<keyword id="KW-1003">Cell membrane</keyword>
<keyword id="KW-0472">Membrane</keyword>
<keyword id="KW-1185">Reference proteome</keyword>
<keyword id="KW-0812">Transmembrane</keyword>
<keyword id="KW-1133">Transmembrane helix</keyword>
<keyword id="KW-0813">Transport</keyword>
<protein>
    <recommendedName>
        <fullName evidence="1">p-hydroxybenzoic acid efflux pump subunit AaeB</fullName>
        <shortName evidence="1">pHBA efflux pump protein B</shortName>
    </recommendedName>
</protein>
<proteinExistence type="inferred from homology"/>